<dbReference type="EMBL" id="DQ683203">
    <property type="protein sequence ID" value="ABG81279.1"/>
    <property type="molecule type" value="Genomic_DNA"/>
</dbReference>
<dbReference type="SMR" id="Q0PVD8"/>
<dbReference type="IntAct" id="Q0PVD8">
    <property type="interactions" value="2"/>
</dbReference>
<dbReference type="MINT" id="Q0PVD8"/>
<dbReference type="GO" id="GO:0030127">
    <property type="term" value="C:COPII vesicle coat"/>
    <property type="evidence" value="ECO:0007669"/>
    <property type="project" value="InterPro"/>
</dbReference>
<dbReference type="GO" id="GO:0070971">
    <property type="term" value="C:endoplasmic reticulum exit site"/>
    <property type="evidence" value="ECO:0007669"/>
    <property type="project" value="TreeGrafter"/>
</dbReference>
<dbReference type="GO" id="GO:0005789">
    <property type="term" value="C:endoplasmic reticulum membrane"/>
    <property type="evidence" value="ECO:0007669"/>
    <property type="project" value="UniProtKB-SubCell"/>
</dbReference>
<dbReference type="GO" id="GO:0000139">
    <property type="term" value="C:Golgi membrane"/>
    <property type="evidence" value="ECO:0007669"/>
    <property type="project" value="UniProtKB-SubCell"/>
</dbReference>
<dbReference type="GO" id="GO:0000149">
    <property type="term" value="F:SNARE binding"/>
    <property type="evidence" value="ECO:0007669"/>
    <property type="project" value="TreeGrafter"/>
</dbReference>
<dbReference type="GO" id="GO:0008270">
    <property type="term" value="F:zinc ion binding"/>
    <property type="evidence" value="ECO:0007669"/>
    <property type="project" value="InterPro"/>
</dbReference>
<dbReference type="GO" id="GO:0090110">
    <property type="term" value="P:COPII-coated vesicle cargo loading"/>
    <property type="evidence" value="ECO:0007669"/>
    <property type="project" value="TreeGrafter"/>
</dbReference>
<dbReference type="GO" id="GO:0006886">
    <property type="term" value="P:intracellular protein transport"/>
    <property type="evidence" value="ECO:0007669"/>
    <property type="project" value="InterPro"/>
</dbReference>
<dbReference type="CDD" id="cd01479">
    <property type="entry name" value="Sec24-like"/>
    <property type="match status" value="1"/>
</dbReference>
<dbReference type="Gene3D" id="2.60.40.1670">
    <property type="entry name" value="beta-sandwich domain of Sec23/24"/>
    <property type="match status" value="1"/>
</dbReference>
<dbReference type="Gene3D" id="1.20.120.730">
    <property type="entry name" value="Sec23/Sec24 helical domain"/>
    <property type="match status" value="1"/>
</dbReference>
<dbReference type="Gene3D" id="3.40.20.10">
    <property type="entry name" value="Severin"/>
    <property type="match status" value="1"/>
</dbReference>
<dbReference type="Gene3D" id="3.40.50.410">
    <property type="entry name" value="von Willebrand factor, type A domain"/>
    <property type="match status" value="1"/>
</dbReference>
<dbReference type="Gene3D" id="2.30.30.380">
    <property type="entry name" value="Zn-finger domain of Sec23/24"/>
    <property type="match status" value="1"/>
</dbReference>
<dbReference type="InterPro" id="IPR029006">
    <property type="entry name" value="ADF-H/Gelsolin-like_dom_sf"/>
</dbReference>
<dbReference type="InterPro" id="IPR007123">
    <property type="entry name" value="Gelsolin-like_dom"/>
</dbReference>
<dbReference type="InterPro" id="IPR036180">
    <property type="entry name" value="Gelsolin-like_dom_sf"/>
</dbReference>
<dbReference type="InterPro" id="IPR006900">
    <property type="entry name" value="Sec23/24_helical_dom"/>
</dbReference>
<dbReference type="InterPro" id="IPR036175">
    <property type="entry name" value="Sec23/24_helical_dom_sf"/>
</dbReference>
<dbReference type="InterPro" id="IPR006896">
    <property type="entry name" value="Sec23/24_trunk_dom"/>
</dbReference>
<dbReference type="InterPro" id="IPR012990">
    <property type="entry name" value="Sec23_24_beta_S"/>
</dbReference>
<dbReference type="InterPro" id="IPR050550">
    <property type="entry name" value="SEC23_SEC24_subfamily"/>
</dbReference>
<dbReference type="InterPro" id="IPR041742">
    <property type="entry name" value="Sec24-like_trunk_dom"/>
</dbReference>
<dbReference type="InterPro" id="IPR036465">
    <property type="entry name" value="vWFA_dom_sf"/>
</dbReference>
<dbReference type="InterPro" id="IPR006895">
    <property type="entry name" value="Znf_Sec23_Sec24"/>
</dbReference>
<dbReference type="InterPro" id="IPR036174">
    <property type="entry name" value="Znf_Sec23_Sec24_sf"/>
</dbReference>
<dbReference type="PANTHER" id="PTHR13803">
    <property type="entry name" value="SEC24-RELATED PROTEIN"/>
    <property type="match status" value="1"/>
</dbReference>
<dbReference type="PANTHER" id="PTHR13803:SF39">
    <property type="entry name" value="SECRETORY 24AB, ISOFORM A"/>
    <property type="match status" value="1"/>
</dbReference>
<dbReference type="Pfam" id="PF00626">
    <property type="entry name" value="Gelsolin"/>
    <property type="match status" value="1"/>
</dbReference>
<dbReference type="Pfam" id="PF08033">
    <property type="entry name" value="Sec23_BS"/>
    <property type="match status" value="1"/>
</dbReference>
<dbReference type="Pfam" id="PF04815">
    <property type="entry name" value="Sec23_helical"/>
    <property type="match status" value="1"/>
</dbReference>
<dbReference type="Pfam" id="PF04811">
    <property type="entry name" value="Sec23_trunk"/>
    <property type="match status" value="1"/>
</dbReference>
<dbReference type="Pfam" id="PF04810">
    <property type="entry name" value="zf-Sec23_Sec24"/>
    <property type="match status" value="1"/>
</dbReference>
<dbReference type="SUPFAM" id="SSF81995">
    <property type="entry name" value="beta-sandwich domain of Sec23/24"/>
    <property type="match status" value="1"/>
</dbReference>
<dbReference type="SUPFAM" id="SSF82754">
    <property type="entry name" value="C-terminal, gelsolin-like domain of Sec23/24"/>
    <property type="match status" value="1"/>
</dbReference>
<dbReference type="SUPFAM" id="SSF81811">
    <property type="entry name" value="Helical domain of Sec23/24"/>
    <property type="match status" value="1"/>
</dbReference>
<dbReference type="SUPFAM" id="SSF53300">
    <property type="entry name" value="vWA-like"/>
    <property type="match status" value="1"/>
</dbReference>
<dbReference type="SUPFAM" id="SSF82919">
    <property type="entry name" value="Zn-finger domain of Sec23/24"/>
    <property type="match status" value="1"/>
</dbReference>
<proteinExistence type="inferred from homology"/>
<comment type="function">
    <text evidence="1">Component of the coat protein complex II (COPII) which promotes the formation of transport vesicles from the endoplasmic reticulum (ER). The coat has two main functions, the physical deformation of the endoplasmic reticulum membrane into vesicles and the selection of cargo molecules (By similarity).</text>
</comment>
<comment type="subunit">
    <text evidence="1">The COPII coat is composed of at least 5 proteins: the SEC23/24 complex, the SEC13/31 complex, and the protein SAR1. Golgi apparatus membrane; Peripheral membrane protein; Cytoplasmic side.</text>
</comment>
<comment type="subcellular location">
    <subcellularLocation>
        <location evidence="1">Cytoplasm</location>
    </subcellularLocation>
    <subcellularLocation>
        <location evidence="1">Cytoplasmic vesicle</location>
        <location evidence="1">COPII-coated vesicle membrane</location>
        <topology evidence="1">Peripheral membrane protein</topology>
        <orientation evidence="1">Cytoplasmic side</orientation>
    </subcellularLocation>
    <subcellularLocation>
        <location evidence="1">Endoplasmic reticulum membrane</location>
        <topology evidence="1">Peripheral membrane protein</topology>
        <orientation evidence="1">Cytoplasmic side</orientation>
    </subcellularLocation>
    <subcellularLocation>
        <location evidence="1">Golgi apparatus membrane</location>
        <topology evidence="1">Peripheral membrane protein</topology>
        <orientation evidence="1">Cytoplasmic side</orientation>
    </subcellularLocation>
</comment>
<comment type="similarity">
    <text evidence="3">Belongs to the SEC23/SEC24 family. SEC24 subfamily.</text>
</comment>
<protein>
    <recommendedName>
        <fullName>Protein transport protein SEC24</fullName>
    </recommendedName>
</protein>
<organism>
    <name type="scientific">Komagataella pastoris</name>
    <name type="common">Yeast</name>
    <name type="synonym">Pichia pastoris</name>
    <dbReference type="NCBI Taxonomy" id="4922"/>
    <lineage>
        <taxon>Eukaryota</taxon>
        <taxon>Fungi</taxon>
        <taxon>Dikarya</taxon>
        <taxon>Ascomycota</taxon>
        <taxon>Saccharomycotina</taxon>
        <taxon>Pichiomycetes</taxon>
        <taxon>Pichiales</taxon>
        <taxon>Pichiaceae</taxon>
        <taxon>Komagataella</taxon>
    </lineage>
</organism>
<accession>Q0PVD8</accession>
<keyword id="KW-0963">Cytoplasm</keyword>
<keyword id="KW-0968">Cytoplasmic vesicle</keyword>
<keyword id="KW-0256">Endoplasmic reticulum</keyword>
<keyword id="KW-0931">ER-Golgi transport</keyword>
<keyword id="KW-0333">Golgi apparatus</keyword>
<keyword id="KW-0472">Membrane</keyword>
<keyword id="KW-0479">Metal-binding</keyword>
<keyword id="KW-0653">Protein transport</keyword>
<keyword id="KW-0813">Transport</keyword>
<keyword id="KW-0862">Zinc</keyword>
<evidence type="ECO:0000250" key="1"/>
<evidence type="ECO:0000256" key="2">
    <source>
        <dbReference type="SAM" id="MobiDB-lite"/>
    </source>
</evidence>
<evidence type="ECO:0000305" key="3"/>
<reference key="1">
    <citation type="journal article" date="2006" name="FEBS Lett.">
        <title>The budding yeast Pichia pastoris has a novel Sec23p homolog.</title>
        <authorList>
            <person name="Esaki M."/>
            <person name="Liu Y."/>
            <person name="Glick B.S."/>
        </authorList>
    </citation>
    <scope>NUCLEOTIDE SEQUENCE [GENOMIC DNA]</scope>
</reference>
<name>SEC24_PICPA</name>
<sequence length="960" mass="106081">MSGKRRAYPSMQYPATEPVATGGSFGYGQQPGAQAYGQQFTPGAGIAGQQLPGATQPNLNGQGAPYGAPGGDQLAQGMSSLNIQPNQQPQPVHQFPSQQQGYINPGAGLGVPPTQAAGPYGVPAAVAPQQQSAQLGYAGPPYGNTYDQQQPQQAAFPFNQLYTADLLKELPPPISDLELPPPPIVLPQGASLTGKPESNASPEYFRCTLNVIPNNNSLLKKSKLPLAVVVNPYQCLRDEDEPVPVVEDTLISRCRRCRSYINPLITFVDRNTKWRCNLCNLTNDVPSGFDFDKDTQQRVDRMARVELNYSVVEFVAPKEYMVRLPQPLVYLFVLDVSTHAIQNGYLATVARTILDSLDQIPNKDGRARVGFIGVDSSLHFFTIPQDSEDENDAQETSMLVVSDLDDVIVPAAENLLAPLQQSRQNIENLLNNFHSYFENNVNPNFALGPALKAGHRLINNIGGKMIVFTSTLPNKGIGALSIRDEEAHSGKAKESSALLSPNDSFYKSFAVECNKSQVTVDMFLASSSYQDVATLSNLPRYTAGQTHFYPAWTAAREEDITKLSKEISNHLSMNINLEAVLRVRGSAGLRMNAFYGNFFNRSSDLCSFPTFPRDQSYLIEISIDEHITKPLAAFQAAVLHTTSFGERRIRVMTLEVPIGKELNQIYASADQLAITNYFTHKAVEKALSSSLIDAREYLNRSLLDIFQVFKKELVAGNLGSSSPLQLCNNLKMLPLLLHSLTKYIAFRPGKVPSDHRAYALNLLASSPIQRLIKFIYPTIYSLHDMADECGLPEELEETYVNEAGEEVTEPIDGDIVLPEPINDTSTLLAPYGLYLIDSGTDLFLYVGGESVPQLLLDVFGVDNPGYIKYGKSELPELNNEFNERLRNVINRVREGKDRITYQNLQIVIGQSKQRTGVPDRIQEDLTPLRLWCFSHLVEDRVGGGTAYREYLNQIREKLSS</sequence>
<feature type="chain" id="PRO_0000295495" description="Protein transport protein SEC24">
    <location>
        <begin position="1"/>
        <end position="960"/>
    </location>
</feature>
<feature type="region of interest" description="Disordered" evidence="2">
    <location>
        <begin position="1"/>
        <end position="110"/>
    </location>
</feature>
<feature type="region of interest" description="Zinc finger-like">
    <location>
        <begin position="254"/>
        <end position="279"/>
    </location>
</feature>
<feature type="compositionally biased region" description="Low complexity" evidence="2">
    <location>
        <begin position="27"/>
        <end position="39"/>
    </location>
</feature>
<feature type="compositionally biased region" description="Polar residues" evidence="2">
    <location>
        <begin position="52"/>
        <end position="61"/>
    </location>
</feature>
<feature type="compositionally biased region" description="Polar residues" evidence="2">
    <location>
        <begin position="76"/>
        <end position="102"/>
    </location>
</feature>
<feature type="binding site" evidence="1">
    <location>
        <position position="254"/>
    </location>
    <ligand>
        <name>Zn(2+)</name>
        <dbReference type="ChEBI" id="CHEBI:29105"/>
    </ligand>
</feature>
<feature type="binding site" evidence="1">
    <location>
        <position position="257"/>
    </location>
    <ligand>
        <name>Zn(2+)</name>
        <dbReference type="ChEBI" id="CHEBI:29105"/>
    </ligand>
</feature>
<feature type="binding site" evidence="1">
    <location>
        <position position="276"/>
    </location>
    <ligand>
        <name>Zn(2+)</name>
        <dbReference type="ChEBI" id="CHEBI:29105"/>
    </ligand>
</feature>
<feature type="binding site" evidence="1">
    <location>
        <position position="279"/>
    </location>
    <ligand>
        <name>Zn(2+)</name>
        <dbReference type="ChEBI" id="CHEBI:29105"/>
    </ligand>
</feature>
<gene>
    <name type="primary">SEC24</name>
</gene>